<proteinExistence type="inferred from homology"/>
<gene>
    <name evidence="1" type="primary">rpsS</name>
    <name type="ordered locus">cu0319</name>
</gene>
<sequence>MPRSLKKGPFVDEHLLNKVDAQNEKGTKQVIKTWSRRSTILPDFIGHTFAVHDGRKHVPVFIDDSMVGHKLGEFAPTKTFKGHVKDDMKGRR</sequence>
<evidence type="ECO:0000255" key="1">
    <source>
        <dbReference type="HAMAP-Rule" id="MF_00531"/>
    </source>
</evidence>
<evidence type="ECO:0000305" key="2"/>
<name>RS19_CORU7</name>
<protein>
    <recommendedName>
        <fullName evidence="1">Small ribosomal subunit protein uS19</fullName>
    </recommendedName>
    <alternativeName>
        <fullName evidence="2">30S ribosomal protein S19</fullName>
    </alternativeName>
</protein>
<feature type="chain" id="PRO_1000127955" description="Small ribosomal subunit protein uS19">
    <location>
        <begin position="1"/>
        <end position="92"/>
    </location>
</feature>
<keyword id="KW-1185">Reference proteome</keyword>
<keyword id="KW-0687">Ribonucleoprotein</keyword>
<keyword id="KW-0689">Ribosomal protein</keyword>
<keyword id="KW-0694">RNA-binding</keyword>
<keyword id="KW-0699">rRNA-binding</keyword>
<organism>
    <name type="scientific">Corynebacterium urealyticum (strain ATCC 43042 / DSM 7109)</name>
    <dbReference type="NCBI Taxonomy" id="504474"/>
    <lineage>
        <taxon>Bacteria</taxon>
        <taxon>Bacillati</taxon>
        <taxon>Actinomycetota</taxon>
        <taxon>Actinomycetes</taxon>
        <taxon>Mycobacteriales</taxon>
        <taxon>Corynebacteriaceae</taxon>
        <taxon>Corynebacterium</taxon>
    </lineage>
</organism>
<comment type="function">
    <text evidence="1">Protein S19 forms a complex with S13 that binds strongly to the 16S ribosomal RNA.</text>
</comment>
<comment type="similarity">
    <text evidence="1">Belongs to the universal ribosomal protein uS19 family.</text>
</comment>
<reference key="1">
    <citation type="journal article" date="2008" name="J. Biotechnol.">
        <title>The lifestyle of Corynebacterium urealyticum derived from its complete genome sequence established by pyrosequencing.</title>
        <authorList>
            <person name="Tauch A."/>
            <person name="Trost E."/>
            <person name="Tilker A."/>
            <person name="Ludewig U."/>
            <person name="Schneiker S."/>
            <person name="Goesmann A."/>
            <person name="Arnold W."/>
            <person name="Bekel T."/>
            <person name="Brinkrolf K."/>
            <person name="Brune I."/>
            <person name="Goetker S."/>
            <person name="Kalinowski J."/>
            <person name="Kamp P.-B."/>
            <person name="Lobo F.P."/>
            <person name="Viehoever P."/>
            <person name="Weisshaar B."/>
            <person name="Soriano F."/>
            <person name="Droege M."/>
            <person name="Puehler A."/>
        </authorList>
    </citation>
    <scope>NUCLEOTIDE SEQUENCE [LARGE SCALE GENOMIC DNA]</scope>
    <source>
        <strain>ATCC 43042 / DSM 7109</strain>
    </source>
</reference>
<accession>B1VEU0</accession>
<dbReference type="EMBL" id="AM942444">
    <property type="protein sequence ID" value="CAQ04279.1"/>
    <property type="molecule type" value="Genomic_DNA"/>
</dbReference>
<dbReference type="RefSeq" id="WP_012359579.1">
    <property type="nucleotide sequence ID" value="NC_010545.1"/>
</dbReference>
<dbReference type="SMR" id="B1VEU0"/>
<dbReference type="STRING" id="504474.cu0319"/>
<dbReference type="GeneID" id="60605122"/>
<dbReference type="KEGG" id="cur:cu0319"/>
<dbReference type="eggNOG" id="COG0185">
    <property type="taxonomic scope" value="Bacteria"/>
</dbReference>
<dbReference type="HOGENOM" id="CLU_144911_0_1_11"/>
<dbReference type="Proteomes" id="UP000001727">
    <property type="component" value="Chromosome"/>
</dbReference>
<dbReference type="GO" id="GO:0005737">
    <property type="term" value="C:cytoplasm"/>
    <property type="evidence" value="ECO:0007669"/>
    <property type="project" value="UniProtKB-ARBA"/>
</dbReference>
<dbReference type="GO" id="GO:0015935">
    <property type="term" value="C:small ribosomal subunit"/>
    <property type="evidence" value="ECO:0007669"/>
    <property type="project" value="InterPro"/>
</dbReference>
<dbReference type="GO" id="GO:0019843">
    <property type="term" value="F:rRNA binding"/>
    <property type="evidence" value="ECO:0007669"/>
    <property type="project" value="UniProtKB-UniRule"/>
</dbReference>
<dbReference type="GO" id="GO:0003735">
    <property type="term" value="F:structural constituent of ribosome"/>
    <property type="evidence" value="ECO:0007669"/>
    <property type="project" value="InterPro"/>
</dbReference>
<dbReference type="GO" id="GO:0000028">
    <property type="term" value="P:ribosomal small subunit assembly"/>
    <property type="evidence" value="ECO:0007669"/>
    <property type="project" value="TreeGrafter"/>
</dbReference>
<dbReference type="GO" id="GO:0006412">
    <property type="term" value="P:translation"/>
    <property type="evidence" value="ECO:0007669"/>
    <property type="project" value="UniProtKB-UniRule"/>
</dbReference>
<dbReference type="FunFam" id="3.30.860.10:FF:000001">
    <property type="entry name" value="30S ribosomal protein S19"/>
    <property type="match status" value="1"/>
</dbReference>
<dbReference type="Gene3D" id="3.30.860.10">
    <property type="entry name" value="30s Ribosomal Protein S19, Chain A"/>
    <property type="match status" value="1"/>
</dbReference>
<dbReference type="HAMAP" id="MF_00531">
    <property type="entry name" value="Ribosomal_uS19"/>
    <property type="match status" value="1"/>
</dbReference>
<dbReference type="InterPro" id="IPR002222">
    <property type="entry name" value="Ribosomal_uS19"/>
</dbReference>
<dbReference type="InterPro" id="IPR005732">
    <property type="entry name" value="Ribosomal_uS19_bac-type"/>
</dbReference>
<dbReference type="InterPro" id="IPR020934">
    <property type="entry name" value="Ribosomal_uS19_CS"/>
</dbReference>
<dbReference type="InterPro" id="IPR023575">
    <property type="entry name" value="Ribosomal_uS19_SF"/>
</dbReference>
<dbReference type="NCBIfam" id="TIGR01050">
    <property type="entry name" value="rpsS_bact"/>
    <property type="match status" value="1"/>
</dbReference>
<dbReference type="PANTHER" id="PTHR11880">
    <property type="entry name" value="RIBOSOMAL PROTEIN S19P FAMILY MEMBER"/>
    <property type="match status" value="1"/>
</dbReference>
<dbReference type="PANTHER" id="PTHR11880:SF8">
    <property type="entry name" value="SMALL RIBOSOMAL SUBUNIT PROTEIN US19M"/>
    <property type="match status" value="1"/>
</dbReference>
<dbReference type="Pfam" id="PF00203">
    <property type="entry name" value="Ribosomal_S19"/>
    <property type="match status" value="1"/>
</dbReference>
<dbReference type="PIRSF" id="PIRSF002144">
    <property type="entry name" value="Ribosomal_S19"/>
    <property type="match status" value="1"/>
</dbReference>
<dbReference type="PRINTS" id="PR00975">
    <property type="entry name" value="RIBOSOMALS19"/>
</dbReference>
<dbReference type="SUPFAM" id="SSF54570">
    <property type="entry name" value="Ribosomal protein S19"/>
    <property type="match status" value="1"/>
</dbReference>
<dbReference type="PROSITE" id="PS00323">
    <property type="entry name" value="RIBOSOMAL_S19"/>
    <property type="match status" value="1"/>
</dbReference>